<sequence length="572" mass="61578">MSAILSADDLNDFISPGVACIKPVETLPAAKPSADNELEISFNTDAPLPSDLPPAQISLTDCLACSGCVTSAEAVLVSLQSHAEVLSQLDSAPGIRLHKSATGTGVSVEGLEQGGKIYVASVSPQSRASIAATFGVTEREAGYMIEHLLSGPKGIKNRAVYRNAFQWVVDTNITREACLVLGAEEVIASMNGTEETKKPILTSSCPGWVCYAEKTHPHVLPHLSRMKSPQALMGTLIKTTLSRKLGISPERIWHVAVMPCFDKKLEASREELTDAVWEGTGTRGVRDVDSVITSKELLMLADSRRIDFSKLPRTPLPSSSHIPFPDPTLNSFLFPSNRRSSSNGSRDAGSSGGNLHYALHYFASQHKGSSVQTIKGRNADVVDYTVVADNGDILLKAARYYGFRNIQNLVRRLKPARPSRMPGGKPIGSARRPNGKATGPDYTYVEVMACPGGCTNGGGQIKVDDPINTSRLEGDSKPGPQEQKMWLAQVDEAYFSGDDSTVCSSVDDRNDLVEGISPSYIKDTLSHWATTTGLDLERLVYTTYREVVSDVGKNAGDAERVIEIANKIGGGW</sequence>
<evidence type="ECO:0000250" key="1"/>
<evidence type="ECO:0000255" key="2"/>
<evidence type="ECO:0000256" key="3">
    <source>
        <dbReference type="SAM" id="MobiDB-lite"/>
    </source>
</evidence>
<evidence type="ECO:0000305" key="4"/>
<name>NAR1_BOTFB</name>
<reference key="1">
    <citation type="journal article" date="2011" name="PLoS Genet.">
        <title>Genomic analysis of the necrotrophic fungal pathogens Sclerotinia sclerotiorum and Botrytis cinerea.</title>
        <authorList>
            <person name="Amselem J."/>
            <person name="Cuomo C.A."/>
            <person name="van Kan J.A.L."/>
            <person name="Viaud M."/>
            <person name="Benito E.P."/>
            <person name="Couloux A."/>
            <person name="Coutinho P.M."/>
            <person name="de Vries R.P."/>
            <person name="Dyer P.S."/>
            <person name="Fillinger S."/>
            <person name="Fournier E."/>
            <person name="Gout L."/>
            <person name="Hahn M."/>
            <person name="Kohn L."/>
            <person name="Lapalu N."/>
            <person name="Plummer K.M."/>
            <person name="Pradier J.-M."/>
            <person name="Quevillon E."/>
            <person name="Sharon A."/>
            <person name="Simon A."/>
            <person name="ten Have A."/>
            <person name="Tudzynski B."/>
            <person name="Tudzynski P."/>
            <person name="Wincker P."/>
            <person name="Andrew M."/>
            <person name="Anthouard V."/>
            <person name="Beever R.E."/>
            <person name="Beffa R."/>
            <person name="Benoit I."/>
            <person name="Bouzid O."/>
            <person name="Brault B."/>
            <person name="Chen Z."/>
            <person name="Choquer M."/>
            <person name="Collemare J."/>
            <person name="Cotton P."/>
            <person name="Danchin E.G."/>
            <person name="Da Silva C."/>
            <person name="Gautier A."/>
            <person name="Giraud C."/>
            <person name="Giraud T."/>
            <person name="Gonzalez C."/>
            <person name="Grossetete S."/>
            <person name="Gueldener U."/>
            <person name="Henrissat B."/>
            <person name="Howlett B.J."/>
            <person name="Kodira C."/>
            <person name="Kretschmer M."/>
            <person name="Lappartient A."/>
            <person name="Leroch M."/>
            <person name="Levis C."/>
            <person name="Mauceli E."/>
            <person name="Neuveglise C."/>
            <person name="Oeser B."/>
            <person name="Pearson M."/>
            <person name="Poulain J."/>
            <person name="Poussereau N."/>
            <person name="Quesneville H."/>
            <person name="Rascle C."/>
            <person name="Schumacher J."/>
            <person name="Segurens B."/>
            <person name="Sexton A."/>
            <person name="Silva E."/>
            <person name="Sirven C."/>
            <person name="Soanes D.M."/>
            <person name="Talbot N.J."/>
            <person name="Templeton M."/>
            <person name="Yandava C."/>
            <person name="Yarden O."/>
            <person name="Zeng Q."/>
            <person name="Rollins J.A."/>
            <person name="Lebrun M.-H."/>
            <person name="Dickman M."/>
        </authorList>
    </citation>
    <scope>NUCLEOTIDE SEQUENCE [LARGE SCALE GENOMIC DNA]</scope>
    <source>
        <strain>B05.10</strain>
    </source>
</reference>
<reference key="2">
    <citation type="journal article" date="2012" name="Eukaryot. Cell">
        <title>Genome update of Botrytis cinerea strains B05.10 and T4.</title>
        <authorList>
            <person name="Staats M."/>
            <person name="van Kan J.A.L."/>
        </authorList>
    </citation>
    <scope>NUCLEOTIDE SEQUENCE [LARGE SCALE GENOMIC DNA]</scope>
    <scope>GENOME REANNOTATION</scope>
    <source>
        <strain>B05.10</strain>
    </source>
</reference>
<reference key="3">
    <citation type="journal article" date="2017" name="Mol. Plant Pathol.">
        <title>A gapless genome sequence of the fungus Botrytis cinerea.</title>
        <authorList>
            <person name="van Kan J.A.L."/>
            <person name="Stassen J.H.M."/>
            <person name="Mosbach A."/>
            <person name="van der Lee T.A.J."/>
            <person name="Faino L."/>
            <person name="Farmer A.D."/>
            <person name="Papasotiriou D.G."/>
            <person name="Zhou S."/>
            <person name="Seidl M.F."/>
            <person name="Cottam E."/>
            <person name="Edel D."/>
            <person name="Hahn M."/>
            <person name="Schwartz D.C."/>
            <person name="Dietrich R.A."/>
            <person name="Widdison S."/>
            <person name="Scalliet G."/>
        </authorList>
    </citation>
    <scope>NUCLEOTIDE SEQUENCE [LARGE SCALE GENOMIC DNA]</scope>
    <scope>GENOME REANNOTATION</scope>
    <source>
        <strain>B05.10</strain>
    </source>
</reference>
<feature type="chain" id="PRO_0000383720" description="Cytosolic Fe-S cluster assembly factor NAR1">
    <location>
        <begin position="1"/>
        <end position="572"/>
    </location>
</feature>
<feature type="region of interest" description="Disordered" evidence="3">
    <location>
        <begin position="416"/>
        <end position="436"/>
    </location>
</feature>
<feature type="binding site" evidence="2">
    <location>
        <position position="20"/>
    </location>
    <ligand>
        <name>[4Fe-4S] cluster</name>
        <dbReference type="ChEBI" id="CHEBI:49883"/>
        <label>1</label>
    </ligand>
</feature>
<feature type="binding site" evidence="2">
    <location>
        <position position="62"/>
    </location>
    <ligand>
        <name>[4Fe-4S] cluster</name>
        <dbReference type="ChEBI" id="CHEBI:49883"/>
        <label>1</label>
    </ligand>
</feature>
<feature type="binding site" evidence="2">
    <location>
        <position position="65"/>
    </location>
    <ligand>
        <name>[4Fe-4S] cluster</name>
        <dbReference type="ChEBI" id="CHEBI:49883"/>
        <label>1</label>
    </ligand>
</feature>
<feature type="binding site" evidence="2">
    <location>
        <position position="68"/>
    </location>
    <ligand>
        <name>[4Fe-4S] cluster</name>
        <dbReference type="ChEBI" id="CHEBI:49883"/>
        <label>1</label>
    </ligand>
</feature>
<feature type="binding site" evidence="2">
    <location>
        <position position="205"/>
    </location>
    <ligand>
        <name>[4Fe-4S] cluster</name>
        <dbReference type="ChEBI" id="CHEBI:49883"/>
        <label>2</label>
    </ligand>
</feature>
<feature type="binding site" evidence="2">
    <location>
        <position position="260"/>
    </location>
    <ligand>
        <name>[4Fe-4S] cluster</name>
        <dbReference type="ChEBI" id="CHEBI:49883"/>
        <label>2</label>
    </ligand>
</feature>
<feature type="binding site" evidence="2">
    <location>
        <position position="450"/>
    </location>
    <ligand>
        <name>[4Fe-4S] cluster</name>
        <dbReference type="ChEBI" id="CHEBI:49883"/>
        <label>2</label>
    </ligand>
</feature>
<feature type="binding site" evidence="2">
    <location>
        <position position="454"/>
    </location>
    <ligand>
        <name>[4Fe-4S] cluster</name>
        <dbReference type="ChEBI" id="CHEBI:49883"/>
        <label>2</label>
    </ligand>
</feature>
<gene>
    <name type="primary">NAR1</name>
    <name type="ORF">BC1G_03256</name>
    <name type="ORF">BCIN_11g05060</name>
</gene>
<accession>A6RR15</accession>
<accession>A0A384JY95</accession>
<keyword id="KW-0004">4Fe-4S</keyword>
<keyword id="KW-0408">Iron</keyword>
<keyword id="KW-0411">Iron-sulfur</keyword>
<keyword id="KW-0479">Metal-binding</keyword>
<keyword id="KW-1185">Reference proteome</keyword>
<dbReference type="EMBL" id="CP009815">
    <property type="protein sequence ID" value="ATZ55227.1"/>
    <property type="molecule type" value="Genomic_DNA"/>
</dbReference>
<dbReference type="SMR" id="A6RR15"/>
<dbReference type="EnsemblFungi" id="Bcin11g05060.1">
    <property type="protein sequence ID" value="Bcin11p05060.1"/>
    <property type="gene ID" value="Bcin11g05060"/>
</dbReference>
<dbReference type="VEuPathDB" id="FungiDB:Bcin11g05060"/>
<dbReference type="OrthoDB" id="10253113at2759"/>
<dbReference type="Proteomes" id="UP000001798">
    <property type="component" value="Chromosome bcin11"/>
</dbReference>
<dbReference type="GO" id="GO:0051539">
    <property type="term" value="F:4 iron, 4 sulfur cluster binding"/>
    <property type="evidence" value="ECO:0007669"/>
    <property type="project" value="UniProtKB-KW"/>
</dbReference>
<dbReference type="GO" id="GO:0051536">
    <property type="term" value="F:iron-sulfur cluster binding"/>
    <property type="evidence" value="ECO:0000250"/>
    <property type="project" value="UniProtKB"/>
</dbReference>
<dbReference type="GO" id="GO:0046872">
    <property type="term" value="F:metal ion binding"/>
    <property type="evidence" value="ECO:0007669"/>
    <property type="project" value="UniProtKB-KW"/>
</dbReference>
<dbReference type="GO" id="GO:0016226">
    <property type="term" value="P:iron-sulfur cluster assembly"/>
    <property type="evidence" value="ECO:0000250"/>
    <property type="project" value="UniProtKB"/>
</dbReference>
<dbReference type="FunFam" id="3.40.50.1780:FF:000004">
    <property type="entry name" value="Cytosolic Fe-S cluster assembly factor nar1"/>
    <property type="match status" value="1"/>
</dbReference>
<dbReference type="Gene3D" id="3.40.50.1780">
    <property type="match status" value="1"/>
</dbReference>
<dbReference type="Gene3D" id="3.40.950.10">
    <property type="entry name" value="Fe-only Hydrogenase (Larger Subunit), Chain L, domain 3"/>
    <property type="match status" value="1"/>
</dbReference>
<dbReference type="InterPro" id="IPR050340">
    <property type="entry name" value="Cytosolic_Fe-S_CAF"/>
</dbReference>
<dbReference type="InterPro" id="IPR009016">
    <property type="entry name" value="Fe_hydrogenase"/>
</dbReference>
<dbReference type="InterPro" id="IPR004108">
    <property type="entry name" value="Fe_hydrogenase_lsu_C"/>
</dbReference>
<dbReference type="PANTHER" id="PTHR11615">
    <property type="entry name" value="NITRATE, FORMATE, IRON DEHYDROGENASE"/>
    <property type="match status" value="1"/>
</dbReference>
<dbReference type="Pfam" id="PF02906">
    <property type="entry name" value="Fe_hyd_lg_C"/>
    <property type="match status" value="1"/>
</dbReference>
<dbReference type="SUPFAM" id="SSF53920">
    <property type="entry name" value="Fe-only hydrogenase"/>
    <property type="match status" value="1"/>
</dbReference>
<protein>
    <recommendedName>
        <fullName>Cytosolic Fe-S cluster assembly factor NAR1</fullName>
    </recommendedName>
    <alternativeName>
        <fullName>Nuclear architecture-related protein 1</fullName>
    </alternativeName>
</protein>
<organism>
    <name type="scientific">Botryotinia fuckeliana (strain B05.10)</name>
    <name type="common">Noble rot fungus</name>
    <name type="synonym">Botrytis cinerea</name>
    <dbReference type="NCBI Taxonomy" id="332648"/>
    <lineage>
        <taxon>Eukaryota</taxon>
        <taxon>Fungi</taxon>
        <taxon>Dikarya</taxon>
        <taxon>Ascomycota</taxon>
        <taxon>Pezizomycotina</taxon>
        <taxon>Leotiomycetes</taxon>
        <taxon>Helotiales</taxon>
        <taxon>Sclerotiniaceae</taxon>
        <taxon>Botrytis</taxon>
    </lineage>
</organism>
<proteinExistence type="inferred from homology"/>
<comment type="function">
    <text evidence="1">Component of the cytosolic Fe/S protein assembly machinery. Required for maturation of extramitochondrial Fe/S proteins. May play a role in the transfer of pre-assembled Fe/S clusters to target apoproteins (By similarity).</text>
</comment>
<comment type="similarity">
    <text evidence="4">Belongs to the NARF family.</text>
</comment>